<accession>P80969</accession>
<accession>Q9SMB5</accession>
<protein>
    <recommendedName>
        <fullName>Tyramine N-feruloyltransferase 10/30</fullName>
        <ecNumber>2.3.1.110</ecNumber>
    </recommendedName>
    <alternativeName>
        <fullName>Hydroxycinnamoyl-CoA: tyramine N-hydroxycinnamoyltransferase</fullName>
    </alternativeName>
</protein>
<dbReference type="EC" id="2.3.1.110"/>
<dbReference type="EMBL" id="AJ005062">
    <property type="protein sequence ID" value="CAB55503.1"/>
    <property type="molecule type" value="mRNA"/>
</dbReference>
<dbReference type="RefSeq" id="NP_001312405.1">
    <property type="nucleotide sequence ID" value="NM_001325476.1"/>
</dbReference>
<dbReference type="SMR" id="P80969"/>
<dbReference type="STRING" id="4097.P80969"/>
<dbReference type="PaxDb" id="4097-P80969"/>
<dbReference type="GeneID" id="107789681"/>
<dbReference type="KEGG" id="nta:107789681"/>
<dbReference type="OrthoDB" id="7305308at2759"/>
<dbReference type="Proteomes" id="UP000084051">
    <property type="component" value="Unplaced"/>
</dbReference>
<dbReference type="GO" id="GO:0005737">
    <property type="term" value="C:cytoplasm"/>
    <property type="evidence" value="ECO:0007669"/>
    <property type="project" value="UniProtKB-SubCell"/>
</dbReference>
<dbReference type="GO" id="GO:0050366">
    <property type="term" value="F:tyramine N-feruloyltransferase activity"/>
    <property type="evidence" value="ECO:0007669"/>
    <property type="project" value="UniProtKB-EC"/>
</dbReference>
<dbReference type="Gene3D" id="3.40.630.30">
    <property type="match status" value="1"/>
</dbReference>
<dbReference type="InterPro" id="IPR016181">
    <property type="entry name" value="Acyl_CoA_acyltransferase"/>
</dbReference>
<dbReference type="InterPro" id="IPR051016">
    <property type="entry name" value="Diverse_Substrate_AcTransf"/>
</dbReference>
<dbReference type="InterPro" id="IPR000182">
    <property type="entry name" value="GNAT_dom"/>
</dbReference>
<dbReference type="PANTHER" id="PTHR10545">
    <property type="entry name" value="DIAMINE N-ACETYLTRANSFERASE"/>
    <property type="match status" value="1"/>
</dbReference>
<dbReference type="PANTHER" id="PTHR10545:SF54">
    <property type="entry name" value="TYRAMINE N-FERULOYLTRANSFERASE 4_11"/>
    <property type="match status" value="1"/>
</dbReference>
<dbReference type="Pfam" id="PF00583">
    <property type="entry name" value="Acetyltransf_1"/>
    <property type="match status" value="1"/>
</dbReference>
<dbReference type="SUPFAM" id="SSF55729">
    <property type="entry name" value="Acyl-CoA N-acyltransferases (Nat)"/>
    <property type="match status" value="1"/>
</dbReference>
<dbReference type="PROSITE" id="PS51186">
    <property type="entry name" value="GNAT"/>
    <property type="match status" value="1"/>
</dbReference>
<proteinExistence type="evidence at protein level"/>
<comment type="function">
    <text>Synthesizes amides which are involved in stress response in the cell wall. Catalyzes the synthesis of hydroxycinnamic acid amides from hydroxycinnamoyl-CoA thioesters and various hydroxyphenylethylamines such as 4-coumaroyl-CoA and sinapoyl-CoA.</text>
</comment>
<comment type="catalytic activity">
    <reaction>
        <text>tyramine + (E)-feruloyl-CoA = N-[(E)-feruloyl]tyramine + CoA + H(+)</text>
        <dbReference type="Rhea" id="RHEA:19685"/>
        <dbReference type="ChEBI" id="CHEBI:15378"/>
        <dbReference type="ChEBI" id="CHEBI:17818"/>
        <dbReference type="ChEBI" id="CHEBI:57287"/>
        <dbReference type="ChEBI" id="CHEBI:87305"/>
        <dbReference type="ChEBI" id="CHEBI:327995"/>
        <dbReference type="EC" id="2.3.1.110"/>
    </reaction>
</comment>
<comment type="activity regulation">
    <text>Inhibited by (2-hydroxyphenyl)amino sulfinyl acetic acid 1,1-dimethylethyl ester, by DEPC and by N-ethylmaleimide.</text>
</comment>
<comment type="subunit">
    <text>Homodimer.</text>
</comment>
<comment type="subcellular location">
    <subcellularLocation>
        <location evidence="3">Cytoplasm</location>
    </subcellularLocation>
</comment>
<comment type="similarity">
    <text evidence="3">Belongs to the acetyltransferase family.</text>
</comment>
<keyword id="KW-0012">Acyltransferase</keyword>
<keyword id="KW-0963">Cytoplasm</keyword>
<keyword id="KW-0903">Direct protein sequencing</keyword>
<keyword id="KW-1185">Reference proteome</keyword>
<keyword id="KW-0808">Transferase</keyword>
<sequence>MATTNNKNLTITEKVYVRVRLANEADISHIYKLFYQIHEYHNYTHLYKATESSLCDLLFKANPNPLFYGPSVLLLEVSPTPFENTKKDEKFKPVLKTFDLRATVEDKEAEEFKSKSCGDEKEDVFIAGYAFFYANYSCFYDKAGIYFESLYFRESYRKLGMGGLLFGTVASIAANNGFASVEGIVAVWNKKSYDFYVNMGVEIFDEFRYGKLVGDALQKYADKEKV</sequence>
<gene>
    <name type="primary">THT10</name>
    <name type="synonym">THT30</name>
</gene>
<evidence type="ECO:0000255" key="1"/>
<evidence type="ECO:0000255" key="2">
    <source>
        <dbReference type="PROSITE-ProRule" id="PRU00532"/>
    </source>
</evidence>
<evidence type="ECO:0000305" key="3"/>
<reference key="1">
    <citation type="journal article" date="1999" name="Eur. J. Biochem.">
        <title>Identification and characterization of cDNA clones encoding hydroxycinnamoyl-CoA:tyramine N-hydroxycinnamoyltransferase from tobacco.</title>
        <authorList>
            <person name="Farmer M.J."/>
            <person name="Czernic P."/>
            <person name="Michael A."/>
            <person name="Negrel J."/>
        </authorList>
    </citation>
    <scope>NUCLEOTIDE SEQUENCE [MRNA]</scope>
    <source>
        <strain>cv. Bottom Special</strain>
        <tissue>Leaf</tissue>
    </source>
</reference>
<reference key="2">
    <citation type="journal article" date="1997" name="Eur. J. Biochem.">
        <title>Purification, characterization and partial amino acid sequencing of hydroxycinnamoyl-CoA:tyramine N-(hydroxycinnamoyl)transferase from tobacco cell-suspension cultures.</title>
        <authorList>
            <person name="Negrel J."/>
            <person name="Javelle F."/>
        </authorList>
    </citation>
    <scope>PROTEIN SEQUENCE OF 28-60 AND 67-71</scope>
    <source>
        <strain>cv. Xanthi</strain>
    </source>
</reference>
<feature type="chain" id="PRO_0000074601" description="Tyramine N-feruloyltransferase 10/30">
    <location>
        <begin position="1"/>
        <end position="226"/>
    </location>
</feature>
<feature type="domain" description="N-acetyltransferase" evidence="2">
    <location>
        <begin position="72"/>
        <end position="222"/>
    </location>
</feature>
<feature type="region of interest" description="Important in binding site and for catalytic activity" evidence="1">
    <location>
        <begin position="29"/>
        <end position="45"/>
    </location>
</feature>
<feature type="site" description="Important for catalytic activity">
    <location>
        <position position="157"/>
    </location>
</feature>
<feature type="site" description="Important for catalytic activity">
    <location>
        <position position="160"/>
    </location>
</feature>
<feature type="site" description="Important for catalytic activity">
    <location>
        <position position="162"/>
    </location>
</feature>
<feature type="sequence conflict" description="In Ref. 2; AA sequence." evidence="3" ref="2">
    <original>SHIYK</original>
    <variation>HEYHN</variation>
    <location>
        <begin position="28"/>
        <end position="32"/>
    </location>
</feature>
<organism>
    <name type="scientific">Nicotiana tabacum</name>
    <name type="common">Common tobacco</name>
    <dbReference type="NCBI Taxonomy" id="4097"/>
    <lineage>
        <taxon>Eukaryota</taxon>
        <taxon>Viridiplantae</taxon>
        <taxon>Streptophyta</taxon>
        <taxon>Embryophyta</taxon>
        <taxon>Tracheophyta</taxon>
        <taxon>Spermatophyta</taxon>
        <taxon>Magnoliopsida</taxon>
        <taxon>eudicotyledons</taxon>
        <taxon>Gunneridae</taxon>
        <taxon>Pentapetalae</taxon>
        <taxon>asterids</taxon>
        <taxon>lamiids</taxon>
        <taxon>Solanales</taxon>
        <taxon>Solanaceae</taxon>
        <taxon>Nicotianoideae</taxon>
        <taxon>Nicotianeae</taxon>
        <taxon>Nicotiana</taxon>
    </lineage>
</organism>
<name>THT10_TOBAC</name>